<reference key="1">
    <citation type="journal article" date="2011" name="J. Bacteriol.">
        <title>Comparative genomics of 28 Salmonella enterica isolates: evidence for CRISPR-mediated adaptive sublineage evolution.</title>
        <authorList>
            <person name="Fricke W.F."/>
            <person name="Mammel M.K."/>
            <person name="McDermott P.F."/>
            <person name="Tartera C."/>
            <person name="White D.G."/>
            <person name="Leclerc J.E."/>
            <person name="Ravel J."/>
            <person name="Cebula T.A."/>
        </authorList>
    </citation>
    <scope>NUCLEOTIDE SEQUENCE [LARGE SCALE GENOMIC DNA]</scope>
    <source>
        <strain>SL476</strain>
    </source>
</reference>
<feature type="chain" id="PRO_1000144875" description="Probable lipid kinase YegS">
    <location>
        <begin position="1"/>
        <end position="299"/>
    </location>
</feature>
<feature type="domain" description="DAGKc" evidence="1">
    <location>
        <begin position="2"/>
        <end position="133"/>
    </location>
</feature>
<feature type="active site" description="Proton acceptor" evidence="1">
    <location>
        <position position="271"/>
    </location>
</feature>
<feature type="binding site" evidence="1">
    <location>
        <position position="40"/>
    </location>
    <ligand>
        <name>ATP</name>
        <dbReference type="ChEBI" id="CHEBI:30616"/>
    </ligand>
</feature>
<feature type="binding site" evidence="1">
    <location>
        <begin position="66"/>
        <end position="72"/>
    </location>
    <ligand>
        <name>ATP</name>
        <dbReference type="ChEBI" id="CHEBI:30616"/>
    </ligand>
</feature>
<feature type="binding site" evidence="1">
    <location>
        <position position="95"/>
    </location>
    <ligand>
        <name>ATP</name>
        <dbReference type="ChEBI" id="CHEBI:30616"/>
    </ligand>
</feature>
<feature type="binding site" evidence="1">
    <location>
        <position position="215"/>
    </location>
    <ligand>
        <name>Mg(2+)</name>
        <dbReference type="ChEBI" id="CHEBI:18420"/>
    </ligand>
</feature>
<feature type="binding site" evidence="1">
    <location>
        <position position="218"/>
    </location>
    <ligand>
        <name>Mg(2+)</name>
        <dbReference type="ChEBI" id="CHEBI:18420"/>
    </ligand>
</feature>
<feature type="binding site" evidence="1">
    <location>
        <position position="220"/>
    </location>
    <ligand>
        <name>Mg(2+)</name>
        <dbReference type="ChEBI" id="CHEBI:18420"/>
    </ligand>
</feature>
<proteinExistence type="inferred from homology"/>
<gene>
    <name evidence="1" type="primary">yegS</name>
    <name type="ordered locus">SeHA_C2372</name>
</gene>
<sequence length="299" mass="32001">MANFPASLLILNGKSADNQPLREAITLLRDEGIQIHVRVTWEKGDAQRYVDEARRLGVETVIAGGGDGTINEVSTALIQIRDGVAPALGLLPLGTANDFATSAGIPEALDKALKLAIAGNAMEIDMARVNDKTCFINMATGGFGTRITTETPEKLKAALGGVSYLIHGLMRMDTLTPDRCEICGENFHWQGDALVIGIGNGRQAGGGQQLCPTALINDGLLQLRIFTGEELLPALFSTLTQSDDNPNIIDGASAWFDIHAPHEITFNLDGEPLSGQEFHIEVLPGALRCRLPPDCPLLR</sequence>
<keyword id="KW-0067">ATP-binding</keyword>
<keyword id="KW-0963">Cytoplasm</keyword>
<keyword id="KW-0418">Kinase</keyword>
<keyword id="KW-0444">Lipid biosynthesis</keyword>
<keyword id="KW-0443">Lipid metabolism</keyword>
<keyword id="KW-0460">Magnesium</keyword>
<keyword id="KW-0479">Metal-binding</keyword>
<keyword id="KW-0547">Nucleotide-binding</keyword>
<keyword id="KW-0594">Phospholipid biosynthesis</keyword>
<keyword id="KW-1208">Phospholipid metabolism</keyword>
<keyword id="KW-0808">Transferase</keyword>
<evidence type="ECO:0000255" key="1">
    <source>
        <dbReference type="HAMAP-Rule" id="MF_01377"/>
    </source>
</evidence>
<comment type="function">
    <text evidence="1">Probably phosphorylates lipids; the in vivo substrate is unknown.</text>
</comment>
<comment type="cofactor">
    <cofactor evidence="1">
        <name>Mg(2+)</name>
        <dbReference type="ChEBI" id="CHEBI:18420"/>
    </cofactor>
    <cofactor evidence="1">
        <name>Ca(2+)</name>
        <dbReference type="ChEBI" id="CHEBI:29108"/>
    </cofactor>
    <text evidence="1">Binds 1 Mg(2+) ion per subunit. Ca(2+) may be able to substitute.</text>
</comment>
<comment type="subcellular location">
    <subcellularLocation>
        <location evidence="1">Cytoplasm</location>
    </subcellularLocation>
</comment>
<comment type="similarity">
    <text evidence="1">Belongs to the diacylglycerol/lipid kinase family. YegS lipid kinase subfamily.</text>
</comment>
<name>YEGS_SALHS</name>
<accession>B4T9V5</accession>
<organism>
    <name type="scientific">Salmonella heidelberg (strain SL476)</name>
    <dbReference type="NCBI Taxonomy" id="454169"/>
    <lineage>
        <taxon>Bacteria</taxon>
        <taxon>Pseudomonadati</taxon>
        <taxon>Pseudomonadota</taxon>
        <taxon>Gammaproteobacteria</taxon>
        <taxon>Enterobacterales</taxon>
        <taxon>Enterobacteriaceae</taxon>
        <taxon>Salmonella</taxon>
    </lineage>
</organism>
<dbReference type="EC" id="2.7.1.-" evidence="1"/>
<dbReference type="EMBL" id="CP001120">
    <property type="protein sequence ID" value="ACF68271.1"/>
    <property type="molecule type" value="Genomic_DNA"/>
</dbReference>
<dbReference type="RefSeq" id="WP_001273392.1">
    <property type="nucleotide sequence ID" value="NC_011083.1"/>
</dbReference>
<dbReference type="SMR" id="B4T9V5"/>
<dbReference type="KEGG" id="seh:SeHA_C2372"/>
<dbReference type="HOGENOM" id="CLU_045532_1_1_6"/>
<dbReference type="Proteomes" id="UP000001866">
    <property type="component" value="Chromosome"/>
</dbReference>
<dbReference type="GO" id="GO:0005737">
    <property type="term" value="C:cytoplasm"/>
    <property type="evidence" value="ECO:0007669"/>
    <property type="project" value="UniProtKB-SubCell"/>
</dbReference>
<dbReference type="GO" id="GO:0005886">
    <property type="term" value="C:plasma membrane"/>
    <property type="evidence" value="ECO:0007669"/>
    <property type="project" value="TreeGrafter"/>
</dbReference>
<dbReference type="GO" id="GO:0005524">
    <property type="term" value="F:ATP binding"/>
    <property type="evidence" value="ECO:0007669"/>
    <property type="project" value="UniProtKB-UniRule"/>
</dbReference>
<dbReference type="GO" id="GO:0001727">
    <property type="term" value="F:lipid kinase activity"/>
    <property type="evidence" value="ECO:0007669"/>
    <property type="project" value="UniProtKB-UniRule"/>
</dbReference>
<dbReference type="GO" id="GO:0000287">
    <property type="term" value="F:magnesium ion binding"/>
    <property type="evidence" value="ECO:0007669"/>
    <property type="project" value="UniProtKB-UniRule"/>
</dbReference>
<dbReference type="GO" id="GO:0008654">
    <property type="term" value="P:phospholipid biosynthetic process"/>
    <property type="evidence" value="ECO:0007669"/>
    <property type="project" value="UniProtKB-UniRule"/>
</dbReference>
<dbReference type="FunFam" id="3.40.50.10330:FF:000008">
    <property type="entry name" value="Probable lipid kinase YegS"/>
    <property type="match status" value="1"/>
</dbReference>
<dbReference type="Gene3D" id="2.60.200.40">
    <property type="match status" value="1"/>
</dbReference>
<dbReference type="Gene3D" id="3.40.50.10330">
    <property type="entry name" value="Probable inorganic polyphosphate/atp-NAD kinase, domain 1"/>
    <property type="match status" value="1"/>
</dbReference>
<dbReference type="HAMAP" id="MF_01377">
    <property type="entry name" value="YegS"/>
    <property type="match status" value="1"/>
</dbReference>
<dbReference type="InterPro" id="IPR017438">
    <property type="entry name" value="ATP-NAD_kinase_N"/>
</dbReference>
<dbReference type="InterPro" id="IPR005218">
    <property type="entry name" value="Diacylglycerol/lipid_kinase"/>
</dbReference>
<dbReference type="InterPro" id="IPR001206">
    <property type="entry name" value="Diacylglycerol_kinase_cat_dom"/>
</dbReference>
<dbReference type="InterPro" id="IPR022433">
    <property type="entry name" value="Lip_kinase_YegS"/>
</dbReference>
<dbReference type="InterPro" id="IPR050187">
    <property type="entry name" value="Lipid_Phosphate_FormReg"/>
</dbReference>
<dbReference type="InterPro" id="IPR016064">
    <property type="entry name" value="NAD/diacylglycerol_kinase_sf"/>
</dbReference>
<dbReference type="InterPro" id="IPR045540">
    <property type="entry name" value="YegS/DAGK_C"/>
</dbReference>
<dbReference type="NCBIfam" id="TIGR03702">
    <property type="entry name" value="lip_kinase_YegS"/>
    <property type="match status" value="1"/>
</dbReference>
<dbReference type="NCBIfam" id="NF009602">
    <property type="entry name" value="PRK13054.1"/>
    <property type="match status" value="1"/>
</dbReference>
<dbReference type="NCBIfam" id="TIGR00147">
    <property type="entry name" value="YegS/Rv2252/BmrU family lipid kinase"/>
    <property type="match status" value="1"/>
</dbReference>
<dbReference type="PANTHER" id="PTHR12358:SF106">
    <property type="entry name" value="LIPID KINASE YEGS"/>
    <property type="match status" value="1"/>
</dbReference>
<dbReference type="PANTHER" id="PTHR12358">
    <property type="entry name" value="SPHINGOSINE KINASE"/>
    <property type="match status" value="1"/>
</dbReference>
<dbReference type="Pfam" id="PF00781">
    <property type="entry name" value="DAGK_cat"/>
    <property type="match status" value="1"/>
</dbReference>
<dbReference type="Pfam" id="PF19279">
    <property type="entry name" value="YegS_C"/>
    <property type="match status" value="1"/>
</dbReference>
<dbReference type="SMART" id="SM00046">
    <property type="entry name" value="DAGKc"/>
    <property type="match status" value="1"/>
</dbReference>
<dbReference type="SUPFAM" id="SSF111331">
    <property type="entry name" value="NAD kinase/diacylglycerol kinase-like"/>
    <property type="match status" value="1"/>
</dbReference>
<dbReference type="PROSITE" id="PS50146">
    <property type="entry name" value="DAGK"/>
    <property type="match status" value="1"/>
</dbReference>
<protein>
    <recommendedName>
        <fullName evidence="1">Probable lipid kinase YegS</fullName>
        <ecNumber evidence="1">2.7.1.-</ecNumber>
    </recommendedName>
</protein>